<dbReference type="EMBL" id="AJ278686">
    <property type="protein sequence ID" value="CAC44623.1"/>
    <property type="molecule type" value="Genomic_DNA"/>
</dbReference>
<dbReference type="SMR" id="Q96VK7"/>
<dbReference type="VEuPathDB" id="FungiDB:CTMYA2_049530"/>
<dbReference type="GO" id="GO:0022627">
    <property type="term" value="C:cytosolic small ribosomal subunit"/>
    <property type="evidence" value="ECO:0007669"/>
    <property type="project" value="UniProtKB-UniRule"/>
</dbReference>
<dbReference type="GO" id="GO:0003735">
    <property type="term" value="F:structural constituent of ribosome"/>
    <property type="evidence" value="ECO:0007669"/>
    <property type="project" value="UniProtKB-UniRule"/>
</dbReference>
<dbReference type="GO" id="GO:0000028">
    <property type="term" value="P:ribosomal small subunit assembly"/>
    <property type="evidence" value="ECO:0007669"/>
    <property type="project" value="UniProtKB-UniRule"/>
</dbReference>
<dbReference type="GO" id="GO:0006412">
    <property type="term" value="P:translation"/>
    <property type="evidence" value="ECO:0007669"/>
    <property type="project" value="UniProtKB-UniRule"/>
</dbReference>
<dbReference type="CDD" id="cd01425">
    <property type="entry name" value="RPS2"/>
    <property type="match status" value="1"/>
</dbReference>
<dbReference type="FunFam" id="3.40.50.10490:FF:000010">
    <property type="entry name" value="40S ribosomal protein S0"/>
    <property type="match status" value="1"/>
</dbReference>
<dbReference type="Gene3D" id="3.40.50.10490">
    <property type="entry name" value="Glucose-6-phosphate isomerase like protein, domain 1"/>
    <property type="match status" value="1"/>
</dbReference>
<dbReference type="HAMAP" id="MF_03015">
    <property type="entry name" value="Ribosomal_S2_euk"/>
    <property type="match status" value="1"/>
</dbReference>
<dbReference type="InterPro" id="IPR001865">
    <property type="entry name" value="Ribosomal_uS2"/>
</dbReference>
<dbReference type="InterPro" id="IPR018130">
    <property type="entry name" value="Ribosomal_uS2_CS"/>
</dbReference>
<dbReference type="InterPro" id="IPR027498">
    <property type="entry name" value="Ribosomal_uS2_euk"/>
</dbReference>
<dbReference type="InterPro" id="IPR005707">
    <property type="entry name" value="Ribosomal_uS2_euk/arc"/>
</dbReference>
<dbReference type="InterPro" id="IPR023591">
    <property type="entry name" value="Ribosomal_uS2_flav_dom_sf"/>
</dbReference>
<dbReference type="NCBIfam" id="TIGR01012">
    <property type="entry name" value="uS2_euk_arch"/>
    <property type="match status" value="1"/>
</dbReference>
<dbReference type="PANTHER" id="PTHR11489">
    <property type="entry name" value="40S RIBOSOMAL PROTEIN SA"/>
    <property type="match status" value="1"/>
</dbReference>
<dbReference type="Pfam" id="PF00318">
    <property type="entry name" value="Ribosomal_S2"/>
    <property type="match status" value="2"/>
</dbReference>
<dbReference type="PRINTS" id="PR00395">
    <property type="entry name" value="RIBOSOMALS2"/>
</dbReference>
<dbReference type="SUPFAM" id="SSF52313">
    <property type="entry name" value="Ribosomal protein S2"/>
    <property type="match status" value="1"/>
</dbReference>
<dbReference type="PROSITE" id="PS00963">
    <property type="entry name" value="RIBOSOMAL_S2_2"/>
    <property type="match status" value="1"/>
</dbReference>
<keyword id="KW-0007">Acetylation</keyword>
<keyword id="KW-0963">Cytoplasm</keyword>
<keyword id="KW-0687">Ribonucleoprotein</keyword>
<keyword id="KW-0689">Ribosomal protein</keyword>
<accession>Q96VK7</accession>
<evidence type="ECO:0000255" key="1">
    <source>
        <dbReference type="HAMAP-Rule" id="MF_03015"/>
    </source>
</evidence>
<evidence type="ECO:0000256" key="2">
    <source>
        <dbReference type="SAM" id="MobiDB-lite"/>
    </source>
</evidence>
<evidence type="ECO:0000305" key="3"/>
<reference key="1">
    <citation type="journal article" date="2001" name="Yeast">
        <title>Molecular cloning of the RPS0 gene from Candida tropicalis.</title>
        <authorList>
            <person name="Baquero C."/>
            <person name="Montero M."/>
            <person name="Sentandreu R."/>
            <person name="Valentin E."/>
        </authorList>
    </citation>
    <scope>NUCLEOTIDE SEQUENCE [GENOMIC DNA]</scope>
    <source>
        <strain>CECT1005</strain>
    </source>
</reference>
<organism>
    <name type="scientific">Candida tropicalis</name>
    <name type="common">Yeast</name>
    <dbReference type="NCBI Taxonomy" id="5482"/>
    <lineage>
        <taxon>Eukaryota</taxon>
        <taxon>Fungi</taxon>
        <taxon>Dikarya</taxon>
        <taxon>Ascomycota</taxon>
        <taxon>Saccharomycotina</taxon>
        <taxon>Pichiomycetes</taxon>
        <taxon>Debaryomycetaceae</taxon>
        <taxon>Candida/Lodderomyces clade</taxon>
        <taxon>Candida</taxon>
    </lineage>
</organism>
<sequence length="261" mass="28631">MSLPASFDLTPEDAKLLLAGNVHLGSKNVQVHNKPYVYKTRPDGVNIINIGKTWEKIVLAARIIAAIPNANDVAVCSSRTFGQRAVLKFAAHTGATAIAGRFTPGNFTNYITRSFKEPRLVIVTDPRTDAQAIKESSYVNIPVIALTDMDSPSEYVDVAIPCNNKGKHSIGLIWWLLAREVLRSRGIIPDRTTEWSVMPDLYFYRDPEEIEQNAAEEAKAEETEEAPAAEAETEWTGETDDVDWADSGATPAAEDAAASNW</sequence>
<gene>
    <name evidence="1" type="primary">RPS0</name>
</gene>
<proteinExistence type="inferred from homology"/>
<comment type="function">
    <text evidence="1">Required for the assembly and/or stability of the 40S ribosomal subunit. Required for the processing of the 20S rRNA-precursor to mature 18S rRNA in a late step of the maturation of 40S ribosomal subunits.</text>
</comment>
<comment type="subunit">
    <text evidence="1">Component of the small ribosomal subunit. Mature ribosomes consist of a small (40S) and a large (60S) subunit. The 40S subunit contains about 33 different proteins and 1 molecule of RNA (18S). The 60S subunit contains about 49 different proteins and 3 molecules of RNA (25S, 5.8S and 5S). Interacts with RPS21.</text>
</comment>
<comment type="subcellular location">
    <subcellularLocation>
        <location evidence="1">Cytoplasm</location>
    </subcellularLocation>
</comment>
<comment type="similarity">
    <text evidence="1">Belongs to the universal ribosomal protein uS2 family.</text>
</comment>
<feature type="initiator methionine" description="Removed" evidence="1">
    <location>
        <position position="1"/>
    </location>
</feature>
<feature type="chain" id="PRO_0000371626" description="Small ribosomal subunit protein uS2">
    <location>
        <begin position="2"/>
        <end position="261"/>
    </location>
</feature>
<feature type="region of interest" description="Disordered" evidence="2">
    <location>
        <begin position="212"/>
        <end position="261"/>
    </location>
</feature>
<feature type="compositionally biased region" description="Acidic residues" evidence="2">
    <location>
        <begin position="222"/>
        <end position="244"/>
    </location>
</feature>
<feature type="modified residue" description="N-acetylserine" evidence="1">
    <location>
        <position position="2"/>
    </location>
</feature>
<protein>
    <recommendedName>
        <fullName evidence="1">Small ribosomal subunit protein uS2</fullName>
    </recommendedName>
    <alternativeName>
        <fullName evidence="3">40S ribosomal protein S0</fullName>
    </alternativeName>
</protein>
<name>RSSA_CANTR</name>